<organism>
    <name type="scientific">Salmonella typhimurium (strain LT2 / SGSC1412 / ATCC 700720)</name>
    <dbReference type="NCBI Taxonomy" id="99287"/>
    <lineage>
        <taxon>Bacteria</taxon>
        <taxon>Pseudomonadati</taxon>
        <taxon>Pseudomonadota</taxon>
        <taxon>Gammaproteobacteria</taxon>
        <taxon>Enterobacterales</taxon>
        <taxon>Enterobacteriaceae</taxon>
        <taxon>Salmonella</taxon>
    </lineage>
</organism>
<protein>
    <recommendedName>
        <fullName evidence="2">Large ribosomal subunit protein bL12</fullName>
    </recommendedName>
    <alternativeName>
        <fullName evidence="3">50S ribosomal protein L7/L12</fullName>
    </alternativeName>
    <alternativeName>
        <fullName>L8</fullName>
    </alternativeName>
</protein>
<proteinExistence type="inferred from homology"/>
<keyword id="KW-0007">Acetylation</keyword>
<keyword id="KW-1185">Reference proteome</keyword>
<keyword id="KW-0687">Ribonucleoprotein</keyword>
<keyword id="KW-0689">Ribosomal protein</keyword>
<evidence type="ECO:0000250" key="1"/>
<evidence type="ECO:0000255" key="2">
    <source>
        <dbReference type="HAMAP-Rule" id="MF_00368"/>
    </source>
</evidence>
<evidence type="ECO:0000305" key="3"/>
<dbReference type="EMBL" id="X53072">
    <property type="protein sequence ID" value="CAA37246.1"/>
    <property type="molecule type" value="Genomic_DNA"/>
</dbReference>
<dbReference type="EMBL" id="AF170176">
    <property type="protein sequence ID" value="AAF33498.1"/>
    <property type="molecule type" value="Genomic_DNA"/>
</dbReference>
<dbReference type="EMBL" id="AE006468">
    <property type="protein sequence ID" value="AAL22980.1"/>
    <property type="molecule type" value="Genomic_DNA"/>
</dbReference>
<dbReference type="PIR" id="S12828">
    <property type="entry name" value="R5EB12"/>
</dbReference>
<dbReference type="RefSeq" id="NP_463021.1">
    <property type="nucleotide sequence ID" value="NC_003197.2"/>
</dbReference>
<dbReference type="RefSeq" id="WP_000028882.1">
    <property type="nucleotide sequence ID" value="NC_003197.2"/>
</dbReference>
<dbReference type="SMR" id="P0A299"/>
<dbReference type="STRING" id="99287.STM4152"/>
<dbReference type="PaxDb" id="99287-STM4152"/>
<dbReference type="GeneID" id="1255678"/>
<dbReference type="GeneID" id="89551069"/>
<dbReference type="KEGG" id="stm:STM4152"/>
<dbReference type="PATRIC" id="fig|99287.12.peg.4364"/>
<dbReference type="HOGENOM" id="CLU_086499_3_2_6"/>
<dbReference type="OMA" id="LEDKWGV"/>
<dbReference type="PhylomeDB" id="P0A299"/>
<dbReference type="BioCyc" id="SENT99287:STM4152-MONOMER"/>
<dbReference type="PRO" id="PR:P0A299"/>
<dbReference type="Proteomes" id="UP000001014">
    <property type="component" value="Chromosome"/>
</dbReference>
<dbReference type="GO" id="GO:0022625">
    <property type="term" value="C:cytosolic large ribosomal subunit"/>
    <property type="evidence" value="ECO:0000318"/>
    <property type="project" value="GO_Central"/>
</dbReference>
<dbReference type="GO" id="GO:0003729">
    <property type="term" value="F:mRNA binding"/>
    <property type="evidence" value="ECO:0000318"/>
    <property type="project" value="GO_Central"/>
</dbReference>
<dbReference type="GO" id="GO:0003735">
    <property type="term" value="F:structural constituent of ribosome"/>
    <property type="evidence" value="ECO:0000318"/>
    <property type="project" value="GO_Central"/>
</dbReference>
<dbReference type="GO" id="GO:0006412">
    <property type="term" value="P:translation"/>
    <property type="evidence" value="ECO:0000318"/>
    <property type="project" value="GO_Central"/>
</dbReference>
<dbReference type="CDD" id="cd00387">
    <property type="entry name" value="Ribosomal_L7_L12"/>
    <property type="match status" value="1"/>
</dbReference>
<dbReference type="FunFam" id="1.20.5.710:FF:000001">
    <property type="entry name" value="50S ribosomal protein L7/L12"/>
    <property type="match status" value="1"/>
</dbReference>
<dbReference type="FunFam" id="3.30.1390.10:FF:000001">
    <property type="entry name" value="50S ribosomal protein L7/L12"/>
    <property type="match status" value="1"/>
</dbReference>
<dbReference type="Gene3D" id="3.30.1390.10">
    <property type="match status" value="1"/>
</dbReference>
<dbReference type="Gene3D" id="1.20.5.710">
    <property type="entry name" value="Single helix bin"/>
    <property type="match status" value="1"/>
</dbReference>
<dbReference type="HAMAP" id="MF_00368">
    <property type="entry name" value="Ribosomal_bL12"/>
    <property type="match status" value="1"/>
</dbReference>
<dbReference type="InterPro" id="IPR000206">
    <property type="entry name" value="Ribosomal_bL12"/>
</dbReference>
<dbReference type="InterPro" id="IPR013823">
    <property type="entry name" value="Ribosomal_bL12_C"/>
</dbReference>
<dbReference type="InterPro" id="IPR014719">
    <property type="entry name" value="Ribosomal_bL12_C/ClpS-like"/>
</dbReference>
<dbReference type="InterPro" id="IPR008932">
    <property type="entry name" value="Ribosomal_bL12_oligo"/>
</dbReference>
<dbReference type="InterPro" id="IPR036235">
    <property type="entry name" value="Ribosomal_bL12_oligo_N_sf"/>
</dbReference>
<dbReference type="NCBIfam" id="TIGR00855">
    <property type="entry name" value="L12"/>
    <property type="match status" value="1"/>
</dbReference>
<dbReference type="PANTHER" id="PTHR45987">
    <property type="entry name" value="39S RIBOSOMAL PROTEIN L12"/>
    <property type="match status" value="1"/>
</dbReference>
<dbReference type="PANTHER" id="PTHR45987:SF4">
    <property type="entry name" value="LARGE RIBOSOMAL SUBUNIT PROTEIN BL12M"/>
    <property type="match status" value="1"/>
</dbReference>
<dbReference type="Pfam" id="PF00542">
    <property type="entry name" value="Ribosomal_L12"/>
    <property type="match status" value="1"/>
</dbReference>
<dbReference type="Pfam" id="PF16320">
    <property type="entry name" value="Ribosomal_L12_N"/>
    <property type="match status" value="1"/>
</dbReference>
<dbReference type="SUPFAM" id="SSF54736">
    <property type="entry name" value="ClpS-like"/>
    <property type="match status" value="1"/>
</dbReference>
<dbReference type="SUPFAM" id="SSF48300">
    <property type="entry name" value="Ribosomal protein L7/12, oligomerisation (N-terminal) domain"/>
    <property type="match status" value="1"/>
</dbReference>
<sequence length="121" mass="12299">MSITKDQIIEAVSAMSVMDVVELISAMEEKFGVSAAAAVAVAAGPAEAAEEKTEFDVILKAAGANKVAVIKAVRGATGLGLKEAKDLVESAPAALKEGVSKDDAEALKKSLEEAGAEVEVK</sequence>
<feature type="initiator methionine" description="Removed" evidence="1">
    <location>
        <position position="1"/>
    </location>
</feature>
<feature type="chain" id="PRO_0000157572" description="Large ribosomal subunit protein bL12">
    <location>
        <begin position="2"/>
        <end position="121"/>
    </location>
</feature>
<feature type="modified residue" description="N-acetylserine; in form L7" evidence="1">
    <location>
        <position position="2"/>
    </location>
</feature>
<comment type="function">
    <text evidence="2">Forms part of the ribosomal stalk which helps the ribosome interact with GTP-bound translation factors. Is thus essential for accurate translation.</text>
</comment>
<comment type="subunit">
    <text evidence="2">Homodimer. Part of the ribosomal stalk of the 50S ribosomal subunit. Forms a multimeric L10(L12)X complex, where L10 forms an elongated spine to which 2 to 4 L12 dimers bind in a sequential fashion. Binds GTP-bound translation factors.</text>
</comment>
<comment type="PTM">
    <text evidence="1">Acetylation of Ser-2 converts L12 to L7.</text>
</comment>
<comment type="similarity">
    <text evidence="2">Belongs to the bacterial ribosomal protein bL12 family.</text>
</comment>
<reference key="1">
    <citation type="journal article" date="1990" name="Nucleic Acids Res.">
        <title>Nucleotide sequence of the rplJL operon and the deduced primary structure of the encoded L10 and L7/L12 proteins of Salmonella typhimurium compared to that of Escherichia coli.</title>
        <authorList>
            <person name="Zhyvoloup A.N."/>
            <person name="Woodmaska M.I."/>
            <person name="Kroupskaya I.V."/>
            <person name="Paton E.B."/>
        </authorList>
    </citation>
    <scope>NUCLEOTIDE SEQUENCE [GENOMIC DNA]</scope>
    <source>
        <strain>LT2</strain>
    </source>
</reference>
<reference key="2">
    <citation type="journal article" date="1990" name="FEBS Lett.">
        <title>Evidence for the ability of L10 ribosomal proteins of Salmonella typhimurium and Klebsiella pneumoniae to regulate rplJL gene expression in Escherichia coli.</title>
        <authorList>
            <person name="Paton E.B."/>
            <person name="Woodmaska M.I."/>
            <person name="Kroupskaya I.V."/>
            <person name="Zhyvoloup A.N."/>
            <person name="Matsuka G.K."/>
        </authorList>
    </citation>
    <scope>NUCLEOTIDE SEQUENCE [GENOMIC DNA]</scope>
    <source>
        <strain>LT2</strain>
    </source>
</reference>
<reference key="3">
    <citation type="journal article" date="2001" name="Nature">
        <title>Complete genome sequence of Salmonella enterica serovar Typhimurium LT2.</title>
        <authorList>
            <person name="McClelland M."/>
            <person name="Sanderson K.E."/>
            <person name="Spieth J."/>
            <person name="Clifton S.W."/>
            <person name="Latreille P."/>
            <person name="Courtney L."/>
            <person name="Porwollik S."/>
            <person name="Ali J."/>
            <person name="Dante M."/>
            <person name="Du F."/>
            <person name="Hou S."/>
            <person name="Layman D."/>
            <person name="Leonard S."/>
            <person name="Nguyen C."/>
            <person name="Scott K."/>
            <person name="Holmes A."/>
            <person name="Grewal N."/>
            <person name="Mulvaney E."/>
            <person name="Ryan E."/>
            <person name="Sun H."/>
            <person name="Florea L."/>
            <person name="Miller W."/>
            <person name="Stoneking T."/>
            <person name="Nhan M."/>
            <person name="Waterston R."/>
            <person name="Wilson R.K."/>
        </authorList>
    </citation>
    <scope>NUCLEOTIDE SEQUENCE [LARGE SCALE GENOMIC DNA]</scope>
    <source>
        <strain>LT2 / SGSC1412 / ATCC 700720</strain>
    </source>
</reference>
<accession>P0A299</accession>
<accession>P18081</accession>
<gene>
    <name evidence="2" type="primary">rplL</name>
    <name type="ordered locus">STM4152</name>
    <name type="ORF">STMF1.11</name>
</gene>
<name>RL7_SALTY</name>